<dbReference type="EC" id="2.1.2.3" evidence="1"/>
<dbReference type="EC" id="3.5.4.10" evidence="1"/>
<dbReference type="EMBL" id="AP007281">
    <property type="protein sequence ID" value="BAG24654.1"/>
    <property type="molecule type" value="Genomic_DNA"/>
</dbReference>
<dbReference type="RefSeq" id="WP_003669729.1">
    <property type="nucleotide sequence ID" value="NC_010609.1"/>
</dbReference>
<dbReference type="SMR" id="B2G5C2"/>
<dbReference type="KEGG" id="lrf:LAR_0138"/>
<dbReference type="HOGENOM" id="CLU_016316_5_2_9"/>
<dbReference type="UniPathway" id="UPA00074">
    <property type="reaction ID" value="UER00133"/>
</dbReference>
<dbReference type="UniPathway" id="UPA00074">
    <property type="reaction ID" value="UER00135"/>
</dbReference>
<dbReference type="GO" id="GO:0005829">
    <property type="term" value="C:cytosol"/>
    <property type="evidence" value="ECO:0007669"/>
    <property type="project" value="TreeGrafter"/>
</dbReference>
<dbReference type="GO" id="GO:0003937">
    <property type="term" value="F:IMP cyclohydrolase activity"/>
    <property type="evidence" value="ECO:0007669"/>
    <property type="project" value="UniProtKB-UniRule"/>
</dbReference>
<dbReference type="GO" id="GO:0004643">
    <property type="term" value="F:phosphoribosylaminoimidazolecarboxamide formyltransferase activity"/>
    <property type="evidence" value="ECO:0007669"/>
    <property type="project" value="UniProtKB-UniRule"/>
</dbReference>
<dbReference type="GO" id="GO:0006189">
    <property type="term" value="P:'de novo' IMP biosynthetic process"/>
    <property type="evidence" value="ECO:0007669"/>
    <property type="project" value="UniProtKB-UniRule"/>
</dbReference>
<dbReference type="CDD" id="cd01421">
    <property type="entry name" value="IMPCH"/>
    <property type="match status" value="1"/>
</dbReference>
<dbReference type="FunFam" id="3.40.140.20:FF:000001">
    <property type="entry name" value="Bifunctional purine biosynthesis protein PurH"/>
    <property type="match status" value="1"/>
</dbReference>
<dbReference type="FunFam" id="3.40.140.20:FF:000002">
    <property type="entry name" value="Bifunctional purine biosynthesis protein PurH"/>
    <property type="match status" value="1"/>
</dbReference>
<dbReference type="FunFam" id="3.40.50.1380:FF:000001">
    <property type="entry name" value="Bifunctional purine biosynthesis protein PurH"/>
    <property type="match status" value="1"/>
</dbReference>
<dbReference type="Gene3D" id="3.40.140.20">
    <property type="match status" value="2"/>
</dbReference>
<dbReference type="Gene3D" id="3.40.50.1380">
    <property type="entry name" value="Methylglyoxal synthase-like domain"/>
    <property type="match status" value="1"/>
</dbReference>
<dbReference type="HAMAP" id="MF_00139">
    <property type="entry name" value="PurH"/>
    <property type="match status" value="1"/>
</dbReference>
<dbReference type="InterPro" id="IPR024051">
    <property type="entry name" value="AICAR_Tfase_dup_dom_sf"/>
</dbReference>
<dbReference type="InterPro" id="IPR016193">
    <property type="entry name" value="Cytidine_deaminase-like"/>
</dbReference>
<dbReference type="InterPro" id="IPR011607">
    <property type="entry name" value="MGS-like_dom"/>
</dbReference>
<dbReference type="InterPro" id="IPR036914">
    <property type="entry name" value="MGS-like_dom_sf"/>
</dbReference>
<dbReference type="InterPro" id="IPR002695">
    <property type="entry name" value="PurH-like"/>
</dbReference>
<dbReference type="NCBIfam" id="NF002049">
    <property type="entry name" value="PRK00881.1"/>
    <property type="match status" value="1"/>
</dbReference>
<dbReference type="NCBIfam" id="TIGR00355">
    <property type="entry name" value="purH"/>
    <property type="match status" value="1"/>
</dbReference>
<dbReference type="PANTHER" id="PTHR11692:SF0">
    <property type="entry name" value="BIFUNCTIONAL PURINE BIOSYNTHESIS PROTEIN ATIC"/>
    <property type="match status" value="1"/>
</dbReference>
<dbReference type="PANTHER" id="PTHR11692">
    <property type="entry name" value="BIFUNCTIONAL PURINE BIOSYNTHESIS PROTEIN PURH"/>
    <property type="match status" value="1"/>
</dbReference>
<dbReference type="Pfam" id="PF01808">
    <property type="entry name" value="AICARFT_IMPCHas"/>
    <property type="match status" value="1"/>
</dbReference>
<dbReference type="Pfam" id="PF02142">
    <property type="entry name" value="MGS"/>
    <property type="match status" value="1"/>
</dbReference>
<dbReference type="PIRSF" id="PIRSF000414">
    <property type="entry name" value="AICARFT_IMPCHas"/>
    <property type="match status" value="1"/>
</dbReference>
<dbReference type="SMART" id="SM00798">
    <property type="entry name" value="AICARFT_IMPCHas"/>
    <property type="match status" value="1"/>
</dbReference>
<dbReference type="SMART" id="SM00851">
    <property type="entry name" value="MGS"/>
    <property type="match status" value="1"/>
</dbReference>
<dbReference type="SUPFAM" id="SSF53927">
    <property type="entry name" value="Cytidine deaminase-like"/>
    <property type="match status" value="1"/>
</dbReference>
<dbReference type="SUPFAM" id="SSF52335">
    <property type="entry name" value="Methylglyoxal synthase-like"/>
    <property type="match status" value="1"/>
</dbReference>
<dbReference type="PROSITE" id="PS51855">
    <property type="entry name" value="MGS"/>
    <property type="match status" value="1"/>
</dbReference>
<organism>
    <name type="scientific">Limosilactobacillus reuteri subsp. reuteri (strain JCM 1112)</name>
    <name type="common">Lactobacillus reuteri</name>
    <dbReference type="NCBI Taxonomy" id="557433"/>
    <lineage>
        <taxon>Bacteria</taxon>
        <taxon>Bacillati</taxon>
        <taxon>Bacillota</taxon>
        <taxon>Bacilli</taxon>
        <taxon>Lactobacillales</taxon>
        <taxon>Lactobacillaceae</taxon>
        <taxon>Limosilactobacillus</taxon>
    </lineage>
</organism>
<proteinExistence type="inferred from homology"/>
<comment type="catalytic activity">
    <reaction evidence="1">
        <text>(6R)-10-formyltetrahydrofolate + 5-amino-1-(5-phospho-beta-D-ribosyl)imidazole-4-carboxamide = 5-formamido-1-(5-phospho-D-ribosyl)imidazole-4-carboxamide + (6S)-5,6,7,8-tetrahydrofolate</text>
        <dbReference type="Rhea" id="RHEA:22192"/>
        <dbReference type="ChEBI" id="CHEBI:57453"/>
        <dbReference type="ChEBI" id="CHEBI:58467"/>
        <dbReference type="ChEBI" id="CHEBI:58475"/>
        <dbReference type="ChEBI" id="CHEBI:195366"/>
        <dbReference type="EC" id="2.1.2.3"/>
    </reaction>
</comment>
<comment type="catalytic activity">
    <reaction evidence="1">
        <text>IMP + H2O = 5-formamido-1-(5-phospho-D-ribosyl)imidazole-4-carboxamide</text>
        <dbReference type="Rhea" id="RHEA:18445"/>
        <dbReference type="ChEBI" id="CHEBI:15377"/>
        <dbReference type="ChEBI" id="CHEBI:58053"/>
        <dbReference type="ChEBI" id="CHEBI:58467"/>
        <dbReference type="EC" id="3.5.4.10"/>
    </reaction>
</comment>
<comment type="pathway">
    <text evidence="1">Purine metabolism; IMP biosynthesis via de novo pathway; 5-formamido-1-(5-phospho-D-ribosyl)imidazole-4-carboxamide from 5-amino-1-(5-phospho-D-ribosyl)imidazole-4-carboxamide (10-formyl THF route): step 1/1.</text>
</comment>
<comment type="pathway">
    <text evidence="1">Purine metabolism; IMP biosynthesis via de novo pathway; IMP from 5-formamido-1-(5-phospho-D-ribosyl)imidazole-4-carboxamide: step 1/1.</text>
</comment>
<comment type="domain">
    <text evidence="1">The IMP cyclohydrolase activity resides in the N-terminal region.</text>
</comment>
<comment type="similarity">
    <text evidence="1">Belongs to the PurH family.</text>
</comment>
<sequence length="512" mass="57033">MKRALVSVSDKQNLVPFVKGLVENGFEIISTGGTKRVLDEAGIETIGIEDVTHFPEILDGRVKTLNPYVHGGLLARRNLPEHMATLEKLNITPIDLVCVNLYPFKETIEKPGVEIADAIENIDIGGPSMVRSAAKNYHDVTIVVDQADYDEVLAQIKEDGETSLATRARLAAKAFRHTAAYDSLISQYLTKQTGLEDPEKLTLSWDLKETMRYGENSHQKAWLYEDALPKAFSVLQAKQLHGKKLSYNNIKDADEALRCIREFDEPTVVAMKHMNPCGIGRGDSLVQAWDRAYEADPVSIFGGVIALNRQVDLVTAEKMHKIFLEIVIAPGFDDDAFELLAKKKNIRLLTLDFSKKDEPTKHEVVSVMGGMLLQEQDMLKEDYHDWQCVTEKQPTEEQLKTLMFAWKAVKHAKSNAIVLANDERTLGVGEGQPNRIDSLKIAVKHAGEAIDDRTVMASDAFFPFGDCVEYAGQNGIKAIVQPGGSVRDQESIEMANKYGIAMVTTGIRHFRH</sequence>
<reference key="1">
    <citation type="journal article" date="2008" name="DNA Res.">
        <title>Comparative genome analysis of Lactobacillus reuteri and Lactobacillus fermentum reveal a genomic island for reuterin and cobalamin production.</title>
        <authorList>
            <person name="Morita H."/>
            <person name="Toh H."/>
            <person name="Fukuda S."/>
            <person name="Horikawa H."/>
            <person name="Oshima K."/>
            <person name="Suzuki T."/>
            <person name="Murakami M."/>
            <person name="Hisamatsu S."/>
            <person name="Kato Y."/>
            <person name="Takizawa T."/>
            <person name="Fukuoka H."/>
            <person name="Yoshimura T."/>
            <person name="Itoh K."/>
            <person name="O'Sullivan D.J."/>
            <person name="McKay L.L."/>
            <person name="Ohno H."/>
            <person name="Kikuchi J."/>
            <person name="Masaoka T."/>
            <person name="Hattori M."/>
        </authorList>
    </citation>
    <scope>NUCLEOTIDE SEQUENCE [LARGE SCALE GENOMIC DNA]</scope>
    <source>
        <strain>JCM 1112</strain>
    </source>
</reference>
<feature type="chain" id="PRO_1000096069" description="Bifunctional purine biosynthesis protein PurH">
    <location>
        <begin position="1"/>
        <end position="512"/>
    </location>
</feature>
<feature type="domain" description="MGS-like" evidence="2">
    <location>
        <begin position="1"/>
        <end position="144"/>
    </location>
</feature>
<gene>
    <name evidence="1" type="primary">purH</name>
    <name type="ordered locus">LAR_0138</name>
</gene>
<name>PUR9_LIMRJ</name>
<accession>B2G5C2</accession>
<protein>
    <recommendedName>
        <fullName evidence="1">Bifunctional purine biosynthesis protein PurH</fullName>
    </recommendedName>
    <domain>
        <recommendedName>
            <fullName evidence="1">Phosphoribosylaminoimidazolecarboxamide formyltransferase</fullName>
            <ecNumber evidence="1">2.1.2.3</ecNumber>
        </recommendedName>
        <alternativeName>
            <fullName evidence="1">AICAR transformylase</fullName>
        </alternativeName>
    </domain>
    <domain>
        <recommendedName>
            <fullName evidence="1">IMP cyclohydrolase</fullName>
            <ecNumber evidence="1">3.5.4.10</ecNumber>
        </recommendedName>
        <alternativeName>
            <fullName evidence="1">ATIC</fullName>
        </alternativeName>
        <alternativeName>
            <fullName evidence="1">IMP synthase</fullName>
        </alternativeName>
        <alternativeName>
            <fullName evidence="1">Inosinicase</fullName>
        </alternativeName>
    </domain>
</protein>
<keyword id="KW-0378">Hydrolase</keyword>
<keyword id="KW-0511">Multifunctional enzyme</keyword>
<keyword id="KW-0658">Purine biosynthesis</keyword>
<keyword id="KW-0808">Transferase</keyword>
<evidence type="ECO:0000255" key="1">
    <source>
        <dbReference type="HAMAP-Rule" id="MF_00139"/>
    </source>
</evidence>
<evidence type="ECO:0000255" key="2">
    <source>
        <dbReference type="PROSITE-ProRule" id="PRU01202"/>
    </source>
</evidence>